<organism>
    <name type="scientific">Alkaliphilus metalliredigens (strain QYMF)</name>
    <dbReference type="NCBI Taxonomy" id="293826"/>
    <lineage>
        <taxon>Bacteria</taxon>
        <taxon>Bacillati</taxon>
        <taxon>Bacillota</taxon>
        <taxon>Clostridia</taxon>
        <taxon>Peptostreptococcales</taxon>
        <taxon>Natronincolaceae</taxon>
        <taxon>Alkaliphilus</taxon>
    </lineage>
</organism>
<gene>
    <name evidence="1" type="primary">groEL</name>
    <name evidence="1" type="synonym">groL</name>
    <name type="ordered locus">Amet_0834</name>
</gene>
<reference key="1">
    <citation type="journal article" date="2016" name="Genome Announc.">
        <title>Complete genome sequence of Alkaliphilus metalliredigens strain QYMF, an alkaliphilic and metal-reducing bacterium isolated from borax-contaminated leachate ponds.</title>
        <authorList>
            <person name="Hwang C."/>
            <person name="Copeland A."/>
            <person name="Lucas S."/>
            <person name="Lapidus A."/>
            <person name="Barry K."/>
            <person name="Detter J.C."/>
            <person name="Glavina Del Rio T."/>
            <person name="Hammon N."/>
            <person name="Israni S."/>
            <person name="Dalin E."/>
            <person name="Tice H."/>
            <person name="Pitluck S."/>
            <person name="Chertkov O."/>
            <person name="Brettin T."/>
            <person name="Bruce D."/>
            <person name="Han C."/>
            <person name="Schmutz J."/>
            <person name="Larimer F."/>
            <person name="Land M.L."/>
            <person name="Hauser L."/>
            <person name="Kyrpides N."/>
            <person name="Mikhailova N."/>
            <person name="Ye Q."/>
            <person name="Zhou J."/>
            <person name="Richardson P."/>
            <person name="Fields M.W."/>
        </authorList>
    </citation>
    <scope>NUCLEOTIDE SEQUENCE [LARGE SCALE GENOMIC DNA]</scope>
    <source>
        <strain>QYMF</strain>
    </source>
</reference>
<accession>A6TLJ1</accession>
<keyword id="KW-0067">ATP-binding</keyword>
<keyword id="KW-0143">Chaperone</keyword>
<keyword id="KW-0963">Cytoplasm</keyword>
<keyword id="KW-0413">Isomerase</keyword>
<keyword id="KW-0547">Nucleotide-binding</keyword>
<keyword id="KW-1185">Reference proteome</keyword>
<dbReference type="EC" id="5.6.1.7" evidence="1"/>
<dbReference type="EMBL" id="CP000724">
    <property type="protein sequence ID" value="ABR47059.1"/>
    <property type="molecule type" value="Genomic_DNA"/>
</dbReference>
<dbReference type="RefSeq" id="WP_012062102.1">
    <property type="nucleotide sequence ID" value="NC_009633.1"/>
</dbReference>
<dbReference type="SMR" id="A6TLJ1"/>
<dbReference type="STRING" id="293826.Amet_0834"/>
<dbReference type="KEGG" id="amt:Amet_0834"/>
<dbReference type="eggNOG" id="COG0459">
    <property type="taxonomic scope" value="Bacteria"/>
</dbReference>
<dbReference type="HOGENOM" id="CLU_016503_3_0_9"/>
<dbReference type="OrthoDB" id="9766614at2"/>
<dbReference type="Proteomes" id="UP000001572">
    <property type="component" value="Chromosome"/>
</dbReference>
<dbReference type="GO" id="GO:0005737">
    <property type="term" value="C:cytoplasm"/>
    <property type="evidence" value="ECO:0007669"/>
    <property type="project" value="UniProtKB-SubCell"/>
</dbReference>
<dbReference type="GO" id="GO:0005524">
    <property type="term" value="F:ATP binding"/>
    <property type="evidence" value="ECO:0007669"/>
    <property type="project" value="UniProtKB-UniRule"/>
</dbReference>
<dbReference type="GO" id="GO:0140662">
    <property type="term" value="F:ATP-dependent protein folding chaperone"/>
    <property type="evidence" value="ECO:0007669"/>
    <property type="project" value="InterPro"/>
</dbReference>
<dbReference type="GO" id="GO:0016853">
    <property type="term" value="F:isomerase activity"/>
    <property type="evidence" value="ECO:0007669"/>
    <property type="project" value="UniProtKB-KW"/>
</dbReference>
<dbReference type="GO" id="GO:0051082">
    <property type="term" value="F:unfolded protein binding"/>
    <property type="evidence" value="ECO:0007669"/>
    <property type="project" value="UniProtKB-UniRule"/>
</dbReference>
<dbReference type="GO" id="GO:0042026">
    <property type="term" value="P:protein refolding"/>
    <property type="evidence" value="ECO:0007669"/>
    <property type="project" value="UniProtKB-UniRule"/>
</dbReference>
<dbReference type="CDD" id="cd03344">
    <property type="entry name" value="GroEL"/>
    <property type="match status" value="1"/>
</dbReference>
<dbReference type="FunFam" id="3.50.7.10:FF:000001">
    <property type="entry name" value="60 kDa chaperonin"/>
    <property type="match status" value="1"/>
</dbReference>
<dbReference type="Gene3D" id="3.50.7.10">
    <property type="entry name" value="GroEL"/>
    <property type="match status" value="1"/>
</dbReference>
<dbReference type="Gene3D" id="1.10.560.10">
    <property type="entry name" value="GroEL-like equatorial domain"/>
    <property type="match status" value="1"/>
</dbReference>
<dbReference type="Gene3D" id="3.30.260.10">
    <property type="entry name" value="TCP-1-like chaperonin intermediate domain"/>
    <property type="match status" value="1"/>
</dbReference>
<dbReference type="HAMAP" id="MF_00600">
    <property type="entry name" value="CH60"/>
    <property type="match status" value="1"/>
</dbReference>
<dbReference type="InterPro" id="IPR018370">
    <property type="entry name" value="Chaperonin_Cpn60_CS"/>
</dbReference>
<dbReference type="InterPro" id="IPR001844">
    <property type="entry name" value="Cpn60/GroEL"/>
</dbReference>
<dbReference type="InterPro" id="IPR002423">
    <property type="entry name" value="Cpn60/GroEL/TCP-1"/>
</dbReference>
<dbReference type="InterPro" id="IPR027409">
    <property type="entry name" value="GroEL-like_apical_dom_sf"/>
</dbReference>
<dbReference type="InterPro" id="IPR027413">
    <property type="entry name" value="GROEL-like_equatorial_sf"/>
</dbReference>
<dbReference type="InterPro" id="IPR027410">
    <property type="entry name" value="TCP-1-like_intermed_sf"/>
</dbReference>
<dbReference type="NCBIfam" id="TIGR02348">
    <property type="entry name" value="GroEL"/>
    <property type="match status" value="1"/>
</dbReference>
<dbReference type="NCBIfam" id="NF000592">
    <property type="entry name" value="PRK00013.1"/>
    <property type="match status" value="1"/>
</dbReference>
<dbReference type="NCBIfam" id="NF009487">
    <property type="entry name" value="PRK12849.1"/>
    <property type="match status" value="1"/>
</dbReference>
<dbReference type="NCBIfam" id="NF009488">
    <property type="entry name" value="PRK12850.1"/>
    <property type="match status" value="1"/>
</dbReference>
<dbReference type="NCBIfam" id="NF009489">
    <property type="entry name" value="PRK12851.1"/>
    <property type="match status" value="1"/>
</dbReference>
<dbReference type="PANTHER" id="PTHR45633">
    <property type="entry name" value="60 KDA HEAT SHOCK PROTEIN, MITOCHONDRIAL"/>
    <property type="match status" value="1"/>
</dbReference>
<dbReference type="Pfam" id="PF00118">
    <property type="entry name" value="Cpn60_TCP1"/>
    <property type="match status" value="1"/>
</dbReference>
<dbReference type="PRINTS" id="PR00298">
    <property type="entry name" value="CHAPERONIN60"/>
</dbReference>
<dbReference type="SUPFAM" id="SSF52029">
    <property type="entry name" value="GroEL apical domain-like"/>
    <property type="match status" value="1"/>
</dbReference>
<dbReference type="SUPFAM" id="SSF48592">
    <property type="entry name" value="GroEL equatorial domain-like"/>
    <property type="match status" value="1"/>
</dbReference>
<dbReference type="SUPFAM" id="SSF54849">
    <property type="entry name" value="GroEL-intermediate domain like"/>
    <property type="match status" value="1"/>
</dbReference>
<dbReference type="PROSITE" id="PS00296">
    <property type="entry name" value="CHAPERONINS_CPN60"/>
    <property type="match status" value="1"/>
</dbReference>
<comment type="function">
    <text evidence="1">Together with its co-chaperonin GroES, plays an essential role in assisting protein folding. The GroEL-GroES system forms a nano-cage that allows encapsulation of the non-native substrate proteins and provides a physical environment optimized to promote and accelerate protein folding.</text>
</comment>
<comment type="catalytic activity">
    <reaction evidence="1">
        <text>ATP + H2O + a folded polypeptide = ADP + phosphate + an unfolded polypeptide.</text>
        <dbReference type="EC" id="5.6.1.7"/>
    </reaction>
</comment>
<comment type="subunit">
    <text evidence="1">Forms a cylinder of 14 subunits composed of two heptameric rings stacked back-to-back. Interacts with the co-chaperonin GroES.</text>
</comment>
<comment type="subcellular location">
    <subcellularLocation>
        <location evidence="1">Cytoplasm</location>
    </subcellularLocation>
</comment>
<comment type="similarity">
    <text evidence="1">Belongs to the chaperonin (HSP60) family.</text>
</comment>
<feature type="chain" id="PRO_1000061250" description="Chaperonin GroEL">
    <location>
        <begin position="1"/>
        <end position="547"/>
    </location>
</feature>
<feature type="binding site" evidence="1">
    <location>
        <begin position="29"/>
        <end position="32"/>
    </location>
    <ligand>
        <name>ATP</name>
        <dbReference type="ChEBI" id="CHEBI:30616"/>
    </ligand>
</feature>
<feature type="binding site" evidence="1">
    <location>
        <begin position="86"/>
        <end position="90"/>
    </location>
    <ligand>
        <name>ATP</name>
        <dbReference type="ChEBI" id="CHEBI:30616"/>
    </ligand>
</feature>
<feature type="binding site" evidence="1">
    <location>
        <position position="413"/>
    </location>
    <ligand>
        <name>ATP</name>
        <dbReference type="ChEBI" id="CHEBI:30616"/>
    </ligand>
</feature>
<feature type="binding site" evidence="1">
    <location>
        <begin position="478"/>
        <end position="480"/>
    </location>
    <ligand>
        <name>ATP</name>
        <dbReference type="ChEBI" id="CHEBI:30616"/>
    </ligand>
</feature>
<feature type="binding site" evidence="1">
    <location>
        <position position="494"/>
    </location>
    <ligand>
        <name>ATP</name>
        <dbReference type="ChEBI" id="CHEBI:30616"/>
    </ligand>
</feature>
<protein>
    <recommendedName>
        <fullName evidence="1">Chaperonin GroEL</fullName>
        <ecNumber evidence="1">5.6.1.7</ecNumber>
    </recommendedName>
    <alternativeName>
        <fullName evidence="1">60 kDa chaperonin</fullName>
    </alternativeName>
    <alternativeName>
        <fullName evidence="1">Chaperonin-60</fullName>
        <shortName evidence="1">Cpn60</shortName>
    </alternativeName>
</protein>
<sequence>MAKEIRFGEKARRSLEAGVNKLADTVKVTLGPKGRNVVIDKKFGSPLITNDGVTIAREIELEDAYENMGAQLVKEVATKTNDVAGDGTTTATLLAQAIIREGLKNVAAGANPMIIKKGIHKAVDAAVAELKAVSKSIESKEAIAQVGAISAADEEIGQLIADAMDKVGKDGVITVEESKSMGTTLDVVEGMQFDRGYLSPYMVTDTEKMEAVFNDAYILVTDKKISNIQEILPILEQIVQQGKKLVIIAEDIEGEALATLVVNKLRGTFECVAVKAPGFGDRRKSMLDDIAVLTGATVISEELGYDLKTATVDMLGTARTVKVDKENTTIVEGAGNQQLIKDRVSQIKKQIEETTSDFDKEKLQERLAKLSGGVAVIQVGAATETELKERKLRIEDALNATRAAVEEGIVAGGGTALVNVIPAVEALLEGSQGDEKTGIQIIRRALEEPLRQIAENAGLEGSVIVNKVMSSDKGIGYDVLNNKYVNMIEAGIVDPTKVTRSALQNAASISAMLLTTESAVVDIASEEPGMPGGMGGMGGMGGGMPMM</sequence>
<name>CH60_ALKMQ</name>
<evidence type="ECO:0000255" key="1">
    <source>
        <dbReference type="HAMAP-Rule" id="MF_00600"/>
    </source>
</evidence>
<proteinExistence type="inferred from homology"/>